<name>ISPG_PSEPW</name>
<keyword id="KW-0004">4Fe-4S</keyword>
<keyword id="KW-0408">Iron</keyword>
<keyword id="KW-0411">Iron-sulfur</keyword>
<keyword id="KW-0414">Isoprene biosynthesis</keyword>
<keyword id="KW-0479">Metal-binding</keyword>
<keyword id="KW-0560">Oxidoreductase</keyword>
<dbReference type="EC" id="1.17.7.3" evidence="1"/>
<dbReference type="EMBL" id="CP000949">
    <property type="protein sequence ID" value="ACA74805.1"/>
    <property type="molecule type" value="Genomic_DNA"/>
</dbReference>
<dbReference type="SMR" id="B1JDV8"/>
<dbReference type="STRING" id="390235.PputW619_4325"/>
<dbReference type="KEGG" id="ppw:PputW619_4325"/>
<dbReference type="eggNOG" id="COG0821">
    <property type="taxonomic scope" value="Bacteria"/>
</dbReference>
<dbReference type="HOGENOM" id="CLU_042258_0_0_6"/>
<dbReference type="OrthoDB" id="9803214at2"/>
<dbReference type="UniPathway" id="UPA00056">
    <property type="reaction ID" value="UER00096"/>
</dbReference>
<dbReference type="GO" id="GO:0051539">
    <property type="term" value="F:4 iron, 4 sulfur cluster binding"/>
    <property type="evidence" value="ECO:0007669"/>
    <property type="project" value="UniProtKB-UniRule"/>
</dbReference>
<dbReference type="GO" id="GO:0046429">
    <property type="term" value="F:4-hydroxy-3-methylbut-2-en-1-yl diphosphate synthase activity (ferredoxin)"/>
    <property type="evidence" value="ECO:0007669"/>
    <property type="project" value="UniProtKB-UniRule"/>
</dbReference>
<dbReference type="GO" id="GO:0141197">
    <property type="term" value="F:4-hydroxy-3-methylbut-2-enyl-diphosphate synthase activity (flavodoxin)"/>
    <property type="evidence" value="ECO:0007669"/>
    <property type="project" value="UniProtKB-EC"/>
</dbReference>
<dbReference type="GO" id="GO:0005506">
    <property type="term" value="F:iron ion binding"/>
    <property type="evidence" value="ECO:0007669"/>
    <property type="project" value="InterPro"/>
</dbReference>
<dbReference type="GO" id="GO:0019288">
    <property type="term" value="P:isopentenyl diphosphate biosynthetic process, methylerythritol 4-phosphate pathway"/>
    <property type="evidence" value="ECO:0007669"/>
    <property type="project" value="UniProtKB-UniRule"/>
</dbReference>
<dbReference type="GO" id="GO:0016114">
    <property type="term" value="P:terpenoid biosynthetic process"/>
    <property type="evidence" value="ECO:0007669"/>
    <property type="project" value="InterPro"/>
</dbReference>
<dbReference type="FunFam" id="3.20.20.20:FF:000001">
    <property type="entry name" value="4-hydroxy-3-methylbut-2-en-1-yl diphosphate synthase (flavodoxin)"/>
    <property type="match status" value="1"/>
</dbReference>
<dbReference type="Gene3D" id="3.20.20.20">
    <property type="entry name" value="Dihydropteroate synthase-like"/>
    <property type="match status" value="1"/>
</dbReference>
<dbReference type="Gene3D" id="3.30.413.10">
    <property type="entry name" value="Sulfite Reductase Hemoprotein, domain 1"/>
    <property type="match status" value="1"/>
</dbReference>
<dbReference type="HAMAP" id="MF_00159">
    <property type="entry name" value="IspG"/>
    <property type="match status" value="1"/>
</dbReference>
<dbReference type="InterPro" id="IPR011005">
    <property type="entry name" value="Dihydropteroate_synth-like_sf"/>
</dbReference>
<dbReference type="InterPro" id="IPR016425">
    <property type="entry name" value="IspG_bac"/>
</dbReference>
<dbReference type="InterPro" id="IPR004588">
    <property type="entry name" value="IspG_bac-typ"/>
</dbReference>
<dbReference type="InterPro" id="IPR045854">
    <property type="entry name" value="NO2/SO3_Rdtase_4Fe4S_sf"/>
</dbReference>
<dbReference type="NCBIfam" id="TIGR00612">
    <property type="entry name" value="ispG_gcpE"/>
    <property type="match status" value="1"/>
</dbReference>
<dbReference type="NCBIfam" id="NF001540">
    <property type="entry name" value="PRK00366.1"/>
    <property type="match status" value="1"/>
</dbReference>
<dbReference type="PANTHER" id="PTHR30454">
    <property type="entry name" value="4-HYDROXY-3-METHYLBUT-2-EN-1-YL DIPHOSPHATE SYNTHASE"/>
    <property type="match status" value="1"/>
</dbReference>
<dbReference type="PANTHER" id="PTHR30454:SF0">
    <property type="entry name" value="4-HYDROXY-3-METHYLBUT-2-EN-1-YL DIPHOSPHATE SYNTHASE (FERREDOXIN), CHLOROPLASTIC"/>
    <property type="match status" value="1"/>
</dbReference>
<dbReference type="Pfam" id="PF04551">
    <property type="entry name" value="GcpE"/>
    <property type="match status" value="1"/>
</dbReference>
<dbReference type="PIRSF" id="PIRSF004640">
    <property type="entry name" value="IspG"/>
    <property type="match status" value="1"/>
</dbReference>
<dbReference type="SUPFAM" id="SSF51412">
    <property type="entry name" value="Inosine monophosphate dehydrogenase (IMPDH)"/>
    <property type="match status" value="1"/>
</dbReference>
<dbReference type="SUPFAM" id="SSF56014">
    <property type="entry name" value="Nitrite and sulphite reductase 4Fe-4S domain-like"/>
    <property type="match status" value="1"/>
</dbReference>
<organism>
    <name type="scientific">Pseudomonas putida (strain W619)</name>
    <dbReference type="NCBI Taxonomy" id="390235"/>
    <lineage>
        <taxon>Bacteria</taxon>
        <taxon>Pseudomonadati</taxon>
        <taxon>Pseudomonadota</taxon>
        <taxon>Gammaproteobacteria</taxon>
        <taxon>Pseudomonadales</taxon>
        <taxon>Pseudomonadaceae</taxon>
        <taxon>Pseudomonas</taxon>
    </lineage>
</organism>
<protein>
    <recommendedName>
        <fullName evidence="1">4-hydroxy-3-methylbut-2-en-1-yl diphosphate synthase (flavodoxin)</fullName>
        <ecNumber evidence="1">1.17.7.3</ecNumber>
    </recommendedName>
    <alternativeName>
        <fullName evidence="1">1-hydroxy-2-methyl-2-(E)-butenyl 4-diphosphate synthase</fullName>
    </alternativeName>
</protein>
<sequence length="369" mass="39673">MHGESPIKRRESRKIWVGNVPVGGDAPIAVQSMTNTDTNDVAATVGQIQRLVDAGVDIVRVSVPDMDAAEAFGKIKQLVSVPLVADIHFDYKIALRVAELGVDCLRINPGNIGREDRVRAVVDAARDRGIPIRIGVNAGSLEKDLQKKYGEPTPAALVESALRHVEHLDRLDFQDFKVSVKASDVFMAVEAYRLLAKQIIQPLHLGITEAGGLRSGTVKSAVGLGMLLAEGIGDTIRISLAADPVEEVKVGYDILKSLHLRSRGINFIACPSCSRQNFDVVKTMNELEGRLEDLLVPLDVAVIGCVVNGPGEAKEAHVGLTGGTPNLIYIDGKPAQKLTNDNLVDELEKLIRQKAAEKVEADAALIARG</sequence>
<comment type="function">
    <text evidence="1">Converts 2C-methyl-D-erythritol 2,4-cyclodiphosphate (ME-2,4cPP) into 1-hydroxy-2-methyl-2-(E)-butenyl 4-diphosphate.</text>
</comment>
<comment type="catalytic activity">
    <reaction evidence="1">
        <text>(2E)-4-hydroxy-3-methylbut-2-enyl diphosphate + oxidized [flavodoxin] + H2O + 2 H(+) = 2-C-methyl-D-erythritol 2,4-cyclic diphosphate + reduced [flavodoxin]</text>
        <dbReference type="Rhea" id="RHEA:43604"/>
        <dbReference type="Rhea" id="RHEA-COMP:10622"/>
        <dbReference type="Rhea" id="RHEA-COMP:10623"/>
        <dbReference type="ChEBI" id="CHEBI:15377"/>
        <dbReference type="ChEBI" id="CHEBI:15378"/>
        <dbReference type="ChEBI" id="CHEBI:57618"/>
        <dbReference type="ChEBI" id="CHEBI:58210"/>
        <dbReference type="ChEBI" id="CHEBI:58483"/>
        <dbReference type="ChEBI" id="CHEBI:128753"/>
        <dbReference type="EC" id="1.17.7.3"/>
    </reaction>
</comment>
<comment type="cofactor">
    <cofactor evidence="1">
        <name>[4Fe-4S] cluster</name>
        <dbReference type="ChEBI" id="CHEBI:49883"/>
    </cofactor>
    <text evidence="1">Binds 1 [4Fe-4S] cluster.</text>
</comment>
<comment type="pathway">
    <text evidence="1">Isoprenoid biosynthesis; isopentenyl diphosphate biosynthesis via DXP pathway; isopentenyl diphosphate from 1-deoxy-D-xylulose 5-phosphate: step 5/6.</text>
</comment>
<comment type="similarity">
    <text evidence="1">Belongs to the IspG family.</text>
</comment>
<evidence type="ECO:0000255" key="1">
    <source>
        <dbReference type="HAMAP-Rule" id="MF_00159"/>
    </source>
</evidence>
<gene>
    <name evidence="1" type="primary">ispG</name>
    <name type="ordered locus">PputW619_4325</name>
</gene>
<reference key="1">
    <citation type="submission" date="2008-02" db="EMBL/GenBank/DDBJ databases">
        <title>Complete sequence of Pseudomonas putida W619.</title>
        <authorList>
            <person name="Copeland A."/>
            <person name="Lucas S."/>
            <person name="Lapidus A."/>
            <person name="Barry K."/>
            <person name="Detter J.C."/>
            <person name="Glavina del Rio T."/>
            <person name="Dalin E."/>
            <person name="Tice H."/>
            <person name="Pitluck S."/>
            <person name="Chain P."/>
            <person name="Malfatti S."/>
            <person name="Shin M."/>
            <person name="Vergez L."/>
            <person name="Schmutz J."/>
            <person name="Larimer F."/>
            <person name="Land M."/>
            <person name="Hauser L."/>
            <person name="Kyrpides N."/>
            <person name="Kim E."/>
            <person name="Taghavi S."/>
            <person name="Vangronsveld D."/>
            <person name="van der Lelie D."/>
            <person name="Richardson P."/>
        </authorList>
    </citation>
    <scope>NUCLEOTIDE SEQUENCE [LARGE SCALE GENOMIC DNA]</scope>
    <source>
        <strain>W619</strain>
    </source>
</reference>
<accession>B1JDV8</accession>
<feature type="chain" id="PRO_1000097173" description="4-hydroxy-3-methylbut-2-en-1-yl diphosphate synthase (flavodoxin)">
    <location>
        <begin position="1"/>
        <end position="369"/>
    </location>
</feature>
<feature type="binding site" evidence="1">
    <location>
        <position position="270"/>
    </location>
    <ligand>
        <name>[4Fe-4S] cluster</name>
        <dbReference type="ChEBI" id="CHEBI:49883"/>
    </ligand>
</feature>
<feature type="binding site" evidence="1">
    <location>
        <position position="273"/>
    </location>
    <ligand>
        <name>[4Fe-4S] cluster</name>
        <dbReference type="ChEBI" id="CHEBI:49883"/>
    </ligand>
</feature>
<feature type="binding site" evidence="1">
    <location>
        <position position="305"/>
    </location>
    <ligand>
        <name>[4Fe-4S] cluster</name>
        <dbReference type="ChEBI" id="CHEBI:49883"/>
    </ligand>
</feature>
<feature type="binding site" evidence="1">
    <location>
        <position position="312"/>
    </location>
    <ligand>
        <name>[4Fe-4S] cluster</name>
        <dbReference type="ChEBI" id="CHEBI:49883"/>
    </ligand>
</feature>
<proteinExistence type="inferred from homology"/>